<accession>A7IKP8</accession>
<organism>
    <name type="scientific">Xanthobacter autotrophicus (strain ATCC BAA-1158 / Py2)</name>
    <dbReference type="NCBI Taxonomy" id="78245"/>
    <lineage>
        <taxon>Bacteria</taxon>
        <taxon>Pseudomonadati</taxon>
        <taxon>Pseudomonadota</taxon>
        <taxon>Alphaproteobacteria</taxon>
        <taxon>Hyphomicrobiales</taxon>
        <taxon>Xanthobacteraceae</taxon>
        <taxon>Xanthobacter</taxon>
    </lineage>
</organism>
<evidence type="ECO:0000255" key="1">
    <source>
        <dbReference type="HAMAP-Rule" id="MF_00362"/>
    </source>
</evidence>
<evidence type="ECO:0000305" key="2"/>
<reference key="1">
    <citation type="submission" date="2007-07" db="EMBL/GenBank/DDBJ databases">
        <title>Complete sequence of chromosome of Xanthobacter autotrophicus Py2.</title>
        <authorList>
            <consortium name="US DOE Joint Genome Institute"/>
            <person name="Copeland A."/>
            <person name="Lucas S."/>
            <person name="Lapidus A."/>
            <person name="Barry K."/>
            <person name="Glavina del Rio T."/>
            <person name="Hammon N."/>
            <person name="Israni S."/>
            <person name="Dalin E."/>
            <person name="Tice H."/>
            <person name="Pitluck S."/>
            <person name="Sims D."/>
            <person name="Brettin T."/>
            <person name="Bruce D."/>
            <person name="Detter J.C."/>
            <person name="Han C."/>
            <person name="Tapia R."/>
            <person name="Brainard J."/>
            <person name="Schmutz J."/>
            <person name="Larimer F."/>
            <person name="Land M."/>
            <person name="Hauser L."/>
            <person name="Kyrpides N."/>
            <person name="Kim E."/>
            <person name="Ensigns S.A."/>
            <person name="Richardson P."/>
        </authorList>
    </citation>
    <scope>NUCLEOTIDE SEQUENCE [LARGE SCALE GENOMIC DNA]</scope>
    <source>
        <strain>ATCC BAA-1158 / Py2</strain>
    </source>
</reference>
<name>RL10_XANP2</name>
<dbReference type="EMBL" id="CP000781">
    <property type="protein sequence ID" value="ABS68591.1"/>
    <property type="molecule type" value="Genomic_DNA"/>
</dbReference>
<dbReference type="SMR" id="A7IKP8"/>
<dbReference type="STRING" id="78245.Xaut_3362"/>
<dbReference type="KEGG" id="xau:Xaut_3362"/>
<dbReference type="eggNOG" id="COG0244">
    <property type="taxonomic scope" value="Bacteria"/>
</dbReference>
<dbReference type="HOGENOM" id="CLU_092227_0_0_5"/>
<dbReference type="OrthoDB" id="9791972at2"/>
<dbReference type="PhylomeDB" id="A7IKP8"/>
<dbReference type="Proteomes" id="UP000002417">
    <property type="component" value="Chromosome"/>
</dbReference>
<dbReference type="GO" id="GO:0015934">
    <property type="term" value="C:large ribosomal subunit"/>
    <property type="evidence" value="ECO:0007669"/>
    <property type="project" value="InterPro"/>
</dbReference>
<dbReference type="GO" id="GO:0070180">
    <property type="term" value="F:large ribosomal subunit rRNA binding"/>
    <property type="evidence" value="ECO:0007669"/>
    <property type="project" value="UniProtKB-UniRule"/>
</dbReference>
<dbReference type="GO" id="GO:0003735">
    <property type="term" value="F:structural constituent of ribosome"/>
    <property type="evidence" value="ECO:0007669"/>
    <property type="project" value="InterPro"/>
</dbReference>
<dbReference type="GO" id="GO:0006412">
    <property type="term" value="P:translation"/>
    <property type="evidence" value="ECO:0007669"/>
    <property type="project" value="UniProtKB-UniRule"/>
</dbReference>
<dbReference type="CDD" id="cd05797">
    <property type="entry name" value="Ribosomal_L10"/>
    <property type="match status" value="1"/>
</dbReference>
<dbReference type="Gene3D" id="3.30.70.1730">
    <property type="match status" value="1"/>
</dbReference>
<dbReference type="Gene3D" id="6.10.250.290">
    <property type="match status" value="1"/>
</dbReference>
<dbReference type="HAMAP" id="MF_00362">
    <property type="entry name" value="Ribosomal_uL10"/>
    <property type="match status" value="1"/>
</dbReference>
<dbReference type="InterPro" id="IPR001790">
    <property type="entry name" value="Ribosomal_uL10"/>
</dbReference>
<dbReference type="InterPro" id="IPR043141">
    <property type="entry name" value="Ribosomal_uL10-like_sf"/>
</dbReference>
<dbReference type="InterPro" id="IPR022973">
    <property type="entry name" value="Ribosomal_uL10_bac"/>
</dbReference>
<dbReference type="InterPro" id="IPR047865">
    <property type="entry name" value="Ribosomal_uL10_bac_type"/>
</dbReference>
<dbReference type="InterPro" id="IPR002363">
    <property type="entry name" value="Ribosomal_uL10_CS_bac"/>
</dbReference>
<dbReference type="NCBIfam" id="NF000955">
    <property type="entry name" value="PRK00099.1-1"/>
    <property type="match status" value="1"/>
</dbReference>
<dbReference type="PANTHER" id="PTHR11560">
    <property type="entry name" value="39S RIBOSOMAL PROTEIN L10, MITOCHONDRIAL"/>
    <property type="match status" value="1"/>
</dbReference>
<dbReference type="Pfam" id="PF00466">
    <property type="entry name" value="Ribosomal_L10"/>
    <property type="match status" value="1"/>
</dbReference>
<dbReference type="SUPFAM" id="SSF160369">
    <property type="entry name" value="Ribosomal protein L10-like"/>
    <property type="match status" value="1"/>
</dbReference>
<dbReference type="PROSITE" id="PS01109">
    <property type="entry name" value="RIBOSOMAL_L10"/>
    <property type="match status" value="1"/>
</dbReference>
<proteinExistence type="inferred from homology"/>
<keyword id="KW-1185">Reference proteome</keyword>
<keyword id="KW-0687">Ribonucleoprotein</keyword>
<keyword id="KW-0689">Ribosomal protein</keyword>
<keyword id="KW-0694">RNA-binding</keyword>
<keyword id="KW-0699">rRNA-binding</keyword>
<comment type="function">
    <text evidence="1">Forms part of the ribosomal stalk, playing a central role in the interaction of the ribosome with GTP-bound translation factors.</text>
</comment>
<comment type="subunit">
    <text evidence="1">Part of the ribosomal stalk of the 50S ribosomal subunit. The N-terminus interacts with L11 and the large rRNA to form the base of the stalk. The C-terminus forms an elongated spine to which L12 dimers bind in a sequential fashion forming a multimeric L10(L12)X complex.</text>
</comment>
<comment type="similarity">
    <text evidence="1">Belongs to the universal ribosomal protein uL10 family.</text>
</comment>
<gene>
    <name evidence="1" type="primary">rplJ</name>
    <name type="ordered locus">Xaut_3362</name>
</gene>
<feature type="chain" id="PRO_1000121034" description="Large ribosomal subunit protein uL10">
    <location>
        <begin position="1"/>
        <end position="172"/>
    </location>
</feature>
<protein>
    <recommendedName>
        <fullName evidence="1">Large ribosomal subunit protein uL10</fullName>
    </recommendedName>
    <alternativeName>
        <fullName evidence="2">50S ribosomal protein L10</fullName>
    </alternativeName>
</protein>
<sequence>MDRAQKQELVTTLTDVFKSTSVVVVAHYSGLTVAQLSRLRRQMKASGATVKVAKNRLAKIALEGSDVAHVSSLLKGPTLIAYSSDPVAAPKVAVDFAKTNDKFVILGGAMGTTALNVDGVKALATLPSLDELRAKLVGLIQAPATKIAQVTTAPAAKLARVFGAYAKQDEAA</sequence>